<proteinExistence type="inferred from homology"/>
<dbReference type="EMBL" id="AAFI02000005">
    <property type="protein sequence ID" value="EAL72034.1"/>
    <property type="molecule type" value="Genomic_DNA"/>
</dbReference>
<dbReference type="RefSeq" id="XP_645912.1">
    <property type="nucleotide sequence ID" value="XM_640820.1"/>
</dbReference>
<dbReference type="FunCoup" id="Q55E69">
    <property type="interactions" value="404"/>
</dbReference>
<dbReference type="STRING" id="44689.Q55E69"/>
<dbReference type="PaxDb" id="44689-DDB0190211"/>
<dbReference type="EnsemblProtists" id="EAL72034">
    <property type="protein sequence ID" value="EAL72034"/>
    <property type="gene ID" value="DDB_G0269368"/>
</dbReference>
<dbReference type="GeneID" id="8616853"/>
<dbReference type="KEGG" id="ddi:DDB_G0269368"/>
<dbReference type="dictyBase" id="DDB_G0269368"/>
<dbReference type="VEuPathDB" id="AmoebaDB:DDB_G0269368"/>
<dbReference type="eggNOG" id="KOG4697">
    <property type="taxonomic scope" value="Eukaryota"/>
</dbReference>
<dbReference type="HOGENOM" id="CLU_1196724_0_0_1"/>
<dbReference type="InParanoid" id="Q55E69"/>
<dbReference type="OMA" id="EYEMVGM"/>
<dbReference type="PhylomeDB" id="Q55E69"/>
<dbReference type="Reactome" id="R-DDI-6811440">
    <property type="pathway name" value="Retrograde transport at the Trans-Golgi-Network"/>
</dbReference>
<dbReference type="PRO" id="PR:Q55E69"/>
<dbReference type="Proteomes" id="UP000002195">
    <property type="component" value="Chromosome 1"/>
</dbReference>
<dbReference type="GO" id="GO:0005829">
    <property type="term" value="C:cytosol"/>
    <property type="evidence" value="ECO:0007669"/>
    <property type="project" value="GOC"/>
</dbReference>
<dbReference type="GO" id="GO:0000139">
    <property type="term" value="C:Golgi membrane"/>
    <property type="evidence" value="ECO:0000318"/>
    <property type="project" value="GO_Central"/>
</dbReference>
<dbReference type="GO" id="GO:0005802">
    <property type="term" value="C:trans-Golgi network"/>
    <property type="evidence" value="ECO:0000318"/>
    <property type="project" value="GO_Central"/>
</dbReference>
<dbReference type="GO" id="GO:0006895">
    <property type="term" value="P:Golgi to endosome transport"/>
    <property type="evidence" value="ECO:0000318"/>
    <property type="project" value="GO_Central"/>
</dbReference>
<dbReference type="GO" id="GO:0043001">
    <property type="term" value="P:Golgi to plasma membrane protein transport"/>
    <property type="evidence" value="ECO:0000318"/>
    <property type="project" value="GO_Central"/>
</dbReference>
<dbReference type="GO" id="GO:0034067">
    <property type="term" value="P:protein localization to Golgi apparatus"/>
    <property type="evidence" value="ECO:0000318"/>
    <property type="project" value="GO_Central"/>
</dbReference>
<dbReference type="InterPro" id="IPR019185">
    <property type="entry name" value="Integral_membrane_SYS1-rel"/>
</dbReference>
<dbReference type="PANTHER" id="PTHR12952:SF0">
    <property type="entry name" value="PROTEIN SYS1 HOMOLOG"/>
    <property type="match status" value="1"/>
</dbReference>
<dbReference type="PANTHER" id="PTHR12952">
    <property type="entry name" value="SYS1"/>
    <property type="match status" value="1"/>
</dbReference>
<dbReference type="Pfam" id="PF09801">
    <property type="entry name" value="SYS1"/>
    <property type="match status" value="1"/>
</dbReference>
<protein>
    <recommendedName>
        <fullName>Protein SYS1 homolog</fullName>
    </recommendedName>
</protein>
<sequence length="232" mass="26074">MFYKYNAWDPKLIIGQILSIQCLYYILLAGILYLLDSMFSSSLSLEQMFEYQSINTHSQSGRVVMTAFLINSLFGSFCLKYIVERSKKCLDHSATVTFIHFIIVWIVSGFPKTVVWWAIQLIGMVIMAMIGEYLCMRKELMDIPLQRGKDLDSTPITIPPSPHTSSPIMNPKNNSNGNSGSNNNNNNIFSNSINSSGGSSSSINSIGNSNNPYQPIELEILTHQDKQDEHDD</sequence>
<gene>
    <name type="primary">sys1</name>
    <name type="ORF">DDB_G0269368</name>
</gene>
<comment type="function">
    <text evidence="1">Involved in protein trafficking.</text>
</comment>
<comment type="subcellular location">
    <subcellularLocation>
        <location evidence="1">Golgi apparatus membrane</location>
        <topology evidence="1">Multi-pass membrane protein</topology>
    </subcellularLocation>
</comment>
<comment type="similarity">
    <text evidence="4">Belongs to the SYS1 family.</text>
</comment>
<feature type="chain" id="PRO_0000329302" description="Protein SYS1 homolog">
    <location>
        <begin position="1"/>
        <end position="232"/>
    </location>
</feature>
<feature type="transmembrane region" description="Helical" evidence="2">
    <location>
        <begin position="12"/>
        <end position="32"/>
    </location>
</feature>
<feature type="transmembrane region" description="Helical" evidence="2">
    <location>
        <begin position="63"/>
        <end position="83"/>
    </location>
</feature>
<feature type="transmembrane region" description="Helical" evidence="2">
    <location>
        <begin position="90"/>
        <end position="110"/>
    </location>
</feature>
<feature type="transmembrane region" description="Helical" evidence="2">
    <location>
        <begin position="114"/>
        <end position="134"/>
    </location>
</feature>
<feature type="region of interest" description="Disordered" evidence="3">
    <location>
        <begin position="151"/>
        <end position="232"/>
    </location>
</feature>
<feature type="compositionally biased region" description="Low complexity" evidence="3">
    <location>
        <begin position="163"/>
        <end position="211"/>
    </location>
</feature>
<feature type="compositionally biased region" description="Basic and acidic residues" evidence="3">
    <location>
        <begin position="220"/>
        <end position="232"/>
    </location>
</feature>
<organism>
    <name type="scientific">Dictyostelium discoideum</name>
    <name type="common">Social amoeba</name>
    <dbReference type="NCBI Taxonomy" id="44689"/>
    <lineage>
        <taxon>Eukaryota</taxon>
        <taxon>Amoebozoa</taxon>
        <taxon>Evosea</taxon>
        <taxon>Eumycetozoa</taxon>
        <taxon>Dictyostelia</taxon>
        <taxon>Dictyosteliales</taxon>
        <taxon>Dictyosteliaceae</taxon>
        <taxon>Dictyostelium</taxon>
    </lineage>
</organism>
<accession>Q55E69</accession>
<keyword id="KW-0333">Golgi apparatus</keyword>
<keyword id="KW-0472">Membrane</keyword>
<keyword id="KW-0653">Protein transport</keyword>
<keyword id="KW-1185">Reference proteome</keyword>
<keyword id="KW-0812">Transmembrane</keyword>
<keyword id="KW-1133">Transmembrane helix</keyword>
<keyword id="KW-0813">Transport</keyword>
<evidence type="ECO:0000250" key="1"/>
<evidence type="ECO:0000255" key="2"/>
<evidence type="ECO:0000256" key="3">
    <source>
        <dbReference type="SAM" id="MobiDB-lite"/>
    </source>
</evidence>
<evidence type="ECO:0000305" key="4"/>
<reference key="1">
    <citation type="journal article" date="2005" name="Nature">
        <title>The genome of the social amoeba Dictyostelium discoideum.</title>
        <authorList>
            <person name="Eichinger L."/>
            <person name="Pachebat J.A."/>
            <person name="Gloeckner G."/>
            <person name="Rajandream M.A."/>
            <person name="Sucgang R."/>
            <person name="Berriman M."/>
            <person name="Song J."/>
            <person name="Olsen R."/>
            <person name="Szafranski K."/>
            <person name="Xu Q."/>
            <person name="Tunggal B."/>
            <person name="Kummerfeld S."/>
            <person name="Madera M."/>
            <person name="Konfortov B.A."/>
            <person name="Rivero F."/>
            <person name="Bankier A.T."/>
            <person name="Lehmann R."/>
            <person name="Hamlin N."/>
            <person name="Davies R."/>
            <person name="Gaudet P."/>
            <person name="Fey P."/>
            <person name="Pilcher K."/>
            <person name="Chen G."/>
            <person name="Saunders D."/>
            <person name="Sodergren E.J."/>
            <person name="Davis P."/>
            <person name="Kerhornou A."/>
            <person name="Nie X."/>
            <person name="Hall N."/>
            <person name="Anjard C."/>
            <person name="Hemphill L."/>
            <person name="Bason N."/>
            <person name="Farbrother P."/>
            <person name="Desany B."/>
            <person name="Just E."/>
            <person name="Morio T."/>
            <person name="Rost R."/>
            <person name="Churcher C.M."/>
            <person name="Cooper J."/>
            <person name="Haydock S."/>
            <person name="van Driessche N."/>
            <person name="Cronin A."/>
            <person name="Goodhead I."/>
            <person name="Muzny D.M."/>
            <person name="Mourier T."/>
            <person name="Pain A."/>
            <person name="Lu M."/>
            <person name="Harper D."/>
            <person name="Lindsay R."/>
            <person name="Hauser H."/>
            <person name="James K.D."/>
            <person name="Quiles M."/>
            <person name="Madan Babu M."/>
            <person name="Saito T."/>
            <person name="Buchrieser C."/>
            <person name="Wardroper A."/>
            <person name="Felder M."/>
            <person name="Thangavelu M."/>
            <person name="Johnson D."/>
            <person name="Knights A."/>
            <person name="Loulseged H."/>
            <person name="Mungall K.L."/>
            <person name="Oliver K."/>
            <person name="Price C."/>
            <person name="Quail M.A."/>
            <person name="Urushihara H."/>
            <person name="Hernandez J."/>
            <person name="Rabbinowitsch E."/>
            <person name="Steffen D."/>
            <person name="Sanders M."/>
            <person name="Ma J."/>
            <person name="Kohara Y."/>
            <person name="Sharp S."/>
            <person name="Simmonds M.N."/>
            <person name="Spiegler S."/>
            <person name="Tivey A."/>
            <person name="Sugano S."/>
            <person name="White B."/>
            <person name="Walker D."/>
            <person name="Woodward J.R."/>
            <person name="Winckler T."/>
            <person name="Tanaka Y."/>
            <person name="Shaulsky G."/>
            <person name="Schleicher M."/>
            <person name="Weinstock G.M."/>
            <person name="Rosenthal A."/>
            <person name="Cox E.C."/>
            <person name="Chisholm R.L."/>
            <person name="Gibbs R.A."/>
            <person name="Loomis W.F."/>
            <person name="Platzer M."/>
            <person name="Kay R.R."/>
            <person name="Williams J.G."/>
            <person name="Dear P.H."/>
            <person name="Noegel A.A."/>
            <person name="Barrell B.G."/>
            <person name="Kuspa A."/>
        </authorList>
    </citation>
    <scope>NUCLEOTIDE SEQUENCE [LARGE SCALE GENOMIC DNA]</scope>
    <source>
        <strain>AX4</strain>
    </source>
</reference>
<name>SYS1_DICDI</name>